<organism>
    <name type="scientific">Buchnera aphidicola subsp. Acyrthosiphon pisum (strain Tuc7)</name>
    <dbReference type="NCBI Taxonomy" id="561501"/>
    <lineage>
        <taxon>Bacteria</taxon>
        <taxon>Pseudomonadati</taxon>
        <taxon>Pseudomonadota</taxon>
        <taxon>Gammaproteobacteria</taxon>
        <taxon>Enterobacterales</taxon>
        <taxon>Erwiniaceae</taxon>
        <taxon>Buchnera</taxon>
    </lineage>
</organism>
<comment type="function">
    <text evidence="1">Required for the formation of a threonylcarbamoyl group on adenosine at position 37 (t(6)A37) in tRNAs that read codons beginning with adenine. Is involved in the transfer of the threonylcarbamoyl moiety of threonylcarbamoyl-AMP (TC-AMP) to the N6 group of A37, together with TsaE and TsaB. TsaD likely plays a direct catalytic role in this reaction.</text>
</comment>
<comment type="catalytic activity">
    <reaction evidence="1">
        <text>L-threonylcarbamoyladenylate + adenosine(37) in tRNA = N(6)-L-threonylcarbamoyladenosine(37) in tRNA + AMP + H(+)</text>
        <dbReference type="Rhea" id="RHEA:37059"/>
        <dbReference type="Rhea" id="RHEA-COMP:10162"/>
        <dbReference type="Rhea" id="RHEA-COMP:10163"/>
        <dbReference type="ChEBI" id="CHEBI:15378"/>
        <dbReference type="ChEBI" id="CHEBI:73682"/>
        <dbReference type="ChEBI" id="CHEBI:74411"/>
        <dbReference type="ChEBI" id="CHEBI:74418"/>
        <dbReference type="ChEBI" id="CHEBI:456215"/>
        <dbReference type="EC" id="2.3.1.234"/>
    </reaction>
</comment>
<comment type="cofactor">
    <cofactor evidence="1">
        <name>Fe(2+)</name>
        <dbReference type="ChEBI" id="CHEBI:29033"/>
    </cofactor>
    <text evidence="1">Binds 1 Fe(2+) ion per subunit.</text>
</comment>
<comment type="subcellular location">
    <subcellularLocation>
        <location evidence="1">Cytoplasm</location>
    </subcellularLocation>
</comment>
<comment type="similarity">
    <text evidence="1">Belongs to the KAE1 / TsaD family.</text>
</comment>
<proteinExistence type="inferred from homology"/>
<protein>
    <recommendedName>
        <fullName evidence="1">tRNA N6-adenosine threonylcarbamoyltransferase</fullName>
        <ecNumber evidence="1">2.3.1.234</ecNumber>
    </recommendedName>
    <alternativeName>
        <fullName evidence="1">N6-L-threonylcarbamoyladenine synthase</fullName>
        <shortName evidence="1">t(6)A synthase</shortName>
    </alternativeName>
    <alternativeName>
        <fullName evidence="1">t(6)A37 threonylcarbamoyladenosine biosynthesis protein TsaD</fullName>
    </alternativeName>
    <alternativeName>
        <fullName evidence="1">tRNA threonylcarbamoyladenosine biosynthesis protein TsaD</fullName>
    </alternativeName>
</protein>
<name>TSAD_BUCAT</name>
<sequence>MRILGIETSCDDTGIAIYDTNKGLLINEIYNQRKLNNIYGGIIPELASREHMEAMIVLLNKIFKKKNIYKYVDMIAYTAGPGLIGSLLVGATFACSLGLSLNIPVLPVHHMEAHLLSPMLDYKTIQFPFIGLLVSGKHTQIIGAHKFGEYEILGNCLDDAAGEAFDKTAKLLGLKYPGGLELSKLASKGIKDYFYFPRPMIHHSDLNFSFSGLKTFAAQTIKKSSKSMQEKANIAKAFEDAVIDILLIKTKKALKKQKWKRLVIAGGVSANQKLRKKSEIMVKKNFNGTVFYSSLEFCTDNAAMIAYLGSLRQKEARNSQLEILVKPKWSIDDLCF</sequence>
<feature type="chain" id="PRO_1000184956" description="tRNA N6-adenosine threonylcarbamoyltransferase">
    <location>
        <begin position="1"/>
        <end position="336"/>
    </location>
</feature>
<feature type="binding site" evidence="1">
    <location>
        <position position="110"/>
    </location>
    <ligand>
        <name>Fe cation</name>
        <dbReference type="ChEBI" id="CHEBI:24875"/>
    </ligand>
</feature>
<feature type="binding site" evidence="1">
    <location>
        <position position="114"/>
    </location>
    <ligand>
        <name>Fe cation</name>
        <dbReference type="ChEBI" id="CHEBI:24875"/>
    </ligand>
</feature>
<feature type="binding site" evidence="1">
    <location>
        <begin position="133"/>
        <end position="137"/>
    </location>
    <ligand>
        <name>substrate</name>
    </ligand>
</feature>
<feature type="binding site" evidence="1">
    <location>
        <position position="166"/>
    </location>
    <ligand>
        <name>substrate</name>
    </ligand>
</feature>
<feature type="binding site" evidence="1">
    <location>
        <position position="179"/>
    </location>
    <ligand>
        <name>substrate</name>
    </ligand>
</feature>
<feature type="binding site" evidence="1">
    <location>
        <position position="271"/>
    </location>
    <ligand>
        <name>substrate</name>
    </ligand>
</feature>
<feature type="binding site" evidence="1">
    <location>
        <position position="300"/>
    </location>
    <ligand>
        <name>Fe cation</name>
        <dbReference type="ChEBI" id="CHEBI:24875"/>
    </ligand>
</feature>
<reference key="1">
    <citation type="journal article" date="2009" name="Science">
        <title>The dynamics and time scale of ongoing genomic erosion in symbiotic bacteria.</title>
        <authorList>
            <person name="Moran N.A."/>
            <person name="McLaughlin H.J."/>
            <person name="Sorek R."/>
        </authorList>
    </citation>
    <scope>NUCLEOTIDE SEQUENCE [LARGE SCALE GENOMIC DNA]</scope>
    <source>
        <strain>Tuc7</strain>
    </source>
</reference>
<dbReference type="EC" id="2.3.1.234" evidence="1"/>
<dbReference type="EMBL" id="CP001158">
    <property type="protein sequence ID" value="ACL29885.1"/>
    <property type="molecule type" value="Genomic_DNA"/>
</dbReference>
<dbReference type="RefSeq" id="WP_009874015.1">
    <property type="nucleotide sequence ID" value="NC_011834.1"/>
</dbReference>
<dbReference type="SMR" id="B8D6X0"/>
<dbReference type="KEGG" id="bau:BUAPTUC7_058"/>
<dbReference type="HOGENOM" id="CLU_023208_0_2_6"/>
<dbReference type="GO" id="GO:0005737">
    <property type="term" value="C:cytoplasm"/>
    <property type="evidence" value="ECO:0007669"/>
    <property type="project" value="UniProtKB-SubCell"/>
</dbReference>
<dbReference type="GO" id="GO:0005506">
    <property type="term" value="F:iron ion binding"/>
    <property type="evidence" value="ECO:0007669"/>
    <property type="project" value="UniProtKB-UniRule"/>
</dbReference>
<dbReference type="GO" id="GO:0061711">
    <property type="term" value="F:N(6)-L-threonylcarbamoyladenine synthase activity"/>
    <property type="evidence" value="ECO:0007669"/>
    <property type="project" value="UniProtKB-EC"/>
</dbReference>
<dbReference type="GO" id="GO:0002949">
    <property type="term" value="P:tRNA threonylcarbamoyladenosine modification"/>
    <property type="evidence" value="ECO:0007669"/>
    <property type="project" value="UniProtKB-UniRule"/>
</dbReference>
<dbReference type="FunFam" id="3.30.420.40:FF:000012">
    <property type="entry name" value="tRNA N6-adenosine threonylcarbamoyltransferase"/>
    <property type="match status" value="1"/>
</dbReference>
<dbReference type="Gene3D" id="3.30.420.40">
    <property type="match status" value="2"/>
</dbReference>
<dbReference type="HAMAP" id="MF_01445">
    <property type="entry name" value="TsaD"/>
    <property type="match status" value="1"/>
</dbReference>
<dbReference type="InterPro" id="IPR043129">
    <property type="entry name" value="ATPase_NBD"/>
</dbReference>
<dbReference type="InterPro" id="IPR000905">
    <property type="entry name" value="Gcp-like_dom"/>
</dbReference>
<dbReference type="InterPro" id="IPR017861">
    <property type="entry name" value="KAE1/TsaD"/>
</dbReference>
<dbReference type="InterPro" id="IPR017860">
    <property type="entry name" value="Peptidase_M22_CS"/>
</dbReference>
<dbReference type="InterPro" id="IPR022450">
    <property type="entry name" value="TsaD"/>
</dbReference>
<dbReference type="NCBIfam" id="TIGR00329">
    <property type="entry name" value="gcp_kae1"/>
    <property type="match status" value="1"/>
</dbReference>
<dbReference type="NCBIfam" id="TIGR03723">
    <property type="entry name" value="T6A_TsaD_YgjD"/>
    <property type="match status" value="1"/>
</dbReference>
<dbReference type="PANTHER" id="PTHR11735">
    <property type="entry name" value="TRNA N6-ADENOSINE THREONYLCARBAMOYLTRANSFERASE"/>
    <property type="match status" value="1"/>
</dbReference>
<dbReference type="PANTHER" id="PTHR11735:SF6">
    <property type="entry name" value="TRNA N6-ADENOSINE THREONYLCARBAMOYLTRANSFERASE, MITOCHONDRIAL"/>
    <property type="match status" value="1"/>
</dbReference>
<dbReference type="Pfam" id="PF00814">
    <property type="entry name" value="TsaD"/>
    <property type="match status" value="1"/>
</dbReference>
<dbReference type="PRINTS" id="PR00789">
    <property type="entry name" value="OSIALOPTASE"/>
</dbReference>
<dbReference type="SUPFAM" id="SSF53067">
    <property type="entry name" value="Actin-like ATPase domain"/>
    <property type="match status" value="2"/>
</dbReference>
<dbReference type="PROSITE" id="PS01016">
    <property type="entry name" value="GLYCOPROTEASE"/>
    <property type="match status" value="1"/>
</dbReference>
<accession>B8D6X0</accession>
<keyword id="KW-0012">Acyltransferase</keyword>
<keyword id="KW-0963">Cytoplasm</keyword>
<keyword id="KW-0408">Iron</keyword>
<keyword id="KW-0479">Metal-binding</keyword>
<keyword id="KW-0808">Transferase</keyword>
<keyword id="KW-0819">tRNA processing</keyword>
<evidence type="ECO:0000255" key="1">
    <source>
        <dbReference type="HAMAP-Rule" id="MF_01445"/>
    </source>
</evidence>
<gene>
    <name evidence="1" type="primary">tsaD</name>
    <name type="synonym">gcp</name>
    <name type="ordered locus">BUAPTUC7_058</name>
</gene>